<reference key="1">
    <citation type="submission" date="2007-11" db="EMBL/GenBank/DDBJ databases">
        <authorList>
            <consortium name="The Salmonella enterica serovar Paratyphi B Genome Sequencing Project"/>
            <person name="McClelland M."/>
            <person name="Sanderson E.K."/>
            <person name="Porwollik S."/>
            <person name="Spieth J."/>
            <person name="Clifton W.S."/>
            <person name="Fulton R."/>
            <person name="Cordes M."/>
            <person name="Wollam A."/>
            <person name="Shah N."/>
            <person name="Pepin K."/>
            <person name="Bhonagiri V."/>
            <person name="Nash W."/>
            <person name="Johnson M."/>
            <person name="Thiruvilangam P."/>
            <person name="Wilson R."/>
        </authorList>
    </citation>
    <scope>NUCLEOTIDE SEQUENCE [LARGE SCALE GENOMIC DNA]</scope>
    <source>
        <strain>ATCC BAA-1250 / SPB7</strain>
    </source>
</reference>
<proteinExistence type="inferred from homology"/>
<sequence>MHNQAPIQRRKSTRIYVGNVPIGDGAPIAVQSMTNTRTTDVEATVNQIKALERVGADIVRVSVPTMDAAEAFKLIKQQVNVPLVADIHFDYRIALKVAEYDVDCLRINPGNIGNEERIRMVVDCARDKNIPIRIGVNAGSLEKDLQEKYGEPTPQALLESAMRHVDHLDRLNFDQFKVSVKASDVFLAVESYRLLAKQIDQPLHLGITEAGGARSGAVKSAIGLGLLLSEGIGDTLRVSLAADPVEEIKVGFDILKSLRIRARGINFIACPTCSRQEFDVIGTVNALEQRLEDIITPMDVSIIGCVVNGPGEALVSTLGVTGGNKKSGLYEDGVRKDRLDNDDMIAQLESRIRAKASQLDEARRIDVLQVEK</sequence>
<organism>
    <name type="scientific">Salmonella paratyphi B (strain ATCC BAA-1250 / SPB7)</name>
    <dbReference type="NCBI Taxonomy" id="1016998"/>
    <lineage>
        <taxon>Bacteria</taxon>
        <taxon>Pseudomonadati</taxon>
        <taxon>Pseudomonadota</taxon>
        <taxon>Gammaproteobacteria</taxon>
        <taxon>Enterobacterales</taxon>
        <taxon>Enterobacteriaceae</taxon>
        <taxon>Salmonella</taxon>
    </lineage>
</organism>
<accession>A9N201</accession>
<name>ISPG_SALPB</name>
<comment type="function">
    <text evidence="1">Converts 2C-methyl-D-erythritol 2,4-cyclodiphosphate (ME-2,4cPP) into 1-hydroxy-2-methyl-2-(E)-butenyl 4-diphosphate.</text>
</comment>
<comment type="catalytic activity">
    <reaction evidence="1">
        <text>(2E)-4-hydroxy-3-methylbut-2-enyl diphosphate + oxidized [flavodoxin] + H2O + 2 H(+) = 2-C-methyl-D-erythritol 2,4-cyclic diphosphate + reduced [flavodoxin]</text>
        <dbReference type="Rhea" id="RHEA:43604"/>
        <dbReference type="Rhea" id="RHEA-COMP:10622"/>
        <dbReference type="Rhea" id="RHEA-COMP:10623"/>
        <dbReference type="ChEBI" id="CHEBI:15377"/>
        <dbReference type="ChEBI" id="CHEBI:15378"/>
        <dbReference type="ChEBI" id="CHEBI:57618"/>
        <dbReference type="ChEBI" id="CHEBI:58210"/>
        <dbReference type="ChEBI" id="CHEBI:58483"/>
        <dbReference type="ChEBI" id="CHEBI:128753"/>
        <dbReference type="EC" id="1.17.7.3"/>
    </reaction>
</comment>
<comment type="cofactor">
    <cofactor evidence="1">
        <name>[4Fe-4S] cluster</name>
        <dbReference type="ChEBI" id="CHEBI:49883"/>
    </cofactor>
    <text evidence="1">Binds 1 [4Fe-4S] cluster.</text>
</comment>
<comment type="pathway">
    <text evidence="1">Isoprenoid biosynthesis; isopentenyl diphosphate biosynthesis via DXP pathway; isopentenyl diphosphate from 1-deoxy-D-xylulose 5-phosphate: step 5/6.</text>
</comment>
<comment type="similarity">
    <text evidence="1">Belongs to the IspG family.</text>
</comment>
<feature type="chain" id="PRO_1000076897" description="4-hydroxy-3-methylbut-2-en-1-yl diphosphate synthase (flavodoxin)">
    <location>
        <begin position="1"/>
        <end position="372"/>
    </location>
</feature>
<feature type="binding site" evidence="1">
    <location>
        <position position="270"/>
    </location>
    <ligand>
        <name>[4Fe-4S] cluster</name>
        <dbReference type="ChEBI" id="CHEBI:49883"/>
    </ligand>
</feature>
<feature type="binding site" evidence="1">
    <location>
        <position position="273"/>
    </location>
    <ligand>
        <name>[4Fe-4S] cluster</name>
        <dbReference type="ChEBI" id="CHEBI:49883"/>
    </ligand>
</feature>
<feature type="binding site" evidence="1">
    <location>
        <position position="305"/>
    </location>
    <ligand>
        <name>[4Fe-4S] cluster</name>
        <dbReference type="ChEBI" id="CHEBI:49883"/>
    </ligand>
</feature>
<feature type="binding site" evidence="1">
    <location>
        <position position="312"/>
    </location>
    <ligand>
        <name>[4Fe-4S] cluster</name>
        <dbReference type="ChEBI" id="CHEBI:49883"/>
    </ligand>
</feature>
<dbReference type="EC" id="1.17.7.3" evidence="1"/>
<dbReference type="EMBL" id="CP000886">
    <property type="protein sequence ID" value="ABX65851.1"/>
    <property type="molecule type" value="Genomic_DNA"/>
</dbReference>
<dbReference type="RefSeq" id="WP_000551803.1">
    <property type="nucleotide sequence ID" value="NC_010102.1"/>
</dbReference>
<dbReference type="SMR" id="A9N201"/>
<dbReference type="KEGG" id="spq:SPAB_00417"/>
<dbReference type="PATRIC" id="fig|1016998.12.peg.392"/>
<dbReference type="HOGENOM" id="CLU_042258_0_0_6"/>
<dbReference type="BioCyc" id="SENT1016998:SPAB_RS01700-MONOMER"/>
<dbReference type="UniPathway" id="UPA00056">
    <property type="reaction ID" value="UER00096"/>
</dbReference>
<dbReference type="Proteomes" id="UP000008556">
    <property type="component" value="Chromosome"/>
</dbReference>
<dbReference type="GO" id="GO:0051539">
    <property type="term" value="F:4 iron, 4 sulfur cluster binding"/>
    <property type="evidence" value="ECO:0007669"/>
    <property type="project" value="UniProtKB-UniRule"/>
</dbReference>
<dbReference type="GO" id="GO:0046429">
    <property type="term" value="F:4-hydroxy-3-methylbut-2-en-1-yl diphosphate synthase activity (ferredoxin)"/>
    <property type="evidence" value="ECO:0007669"/>
    <property type="project" value="UniProtKB-UniRule"/>
</dbReference>
<dbReference type="GO" id="GO:0141197">
    <property type="term" value="F:4-hydroxy-3-methylbut-2-enyl-diphosphate synthase activity (flavodoxin)"/>
    <property type="evidence" value="ECO:0007669"/>
    <property type="project" value="UniProtKB-EC"/>
</dbReference>
<dbReference type="GO" id="GO:0005506">
    <property type="term" value="F:iron ion binding"/>
    <property type="evidence" value="ECO:0007669"/>
    <property type="project" value="InterPro"/>
</dbReference>
<dbReference type="GO" id="GO:0019288">
    <property type="term" value="P:isopentenyl diphosphate biosynthetic process, methylerythritol 4-phosphate pathway"/>
    <property type="evidence" value="ECO:0007669"/>
    <property type="project" value="UniProtKB-UniRule"/>
</dbReference>
<dbReference type="GO" id="GO:0016114">
    <property type="term" value="P:terpenoid biosynthetic process"/>
    <property type="evidence" value="ECO:0007669"/>
    <property type="project" value="InterPro"/>
</dbReference>
<dbReference type="FunFam" id="3.20.20.20:FF:000001">
    <property type="entry name" value="4-hydroxy-3-methylbut-2-en-1-yl diphosphate synthase (flavodoxin)"/>
    <property type="match status" value="1"/>
</dbReference>
<dbReference type="FunFam" id="3.30.413.10:FF:000002">
    <property type="entry name" value="4-hydroxy-3-methylbut-2-en-1-yl diphosphate synthase (flavodoxin)"/>
    <property type="match status" value="1"/>
</dbReference>
<dbReference type="Gene3D" id="3.20.20.20">
    <property type="entry name" value="Dihydropteroate synthase-like"/>
    <property type="match status" value="1"/>
</dbReference>
<dbReference type="Gene3D" id="3.30.413.10">
    <property type="entry name" value="Sulfite Reductase Hemoprotein, domain 1"/>
    <property type="match status" value="1"/>
</dbReference>
<dbReference type="HAMAP" id="MF_00159">
    <property type="entry name" value="IspG"/>
    <property type="match status" value="1"/>
</dbReference>
<dbReference type="InterPro" id="IPR011005">
    <property type="entry name" value="Dihydropteroate_synth-like_sf"/>
</dbReference>
<dbReference type="InterPro" id="IPR016425">
    <property type="entry name" value="IspG_bac"/>
</dbReference>
<dbReference type="InterPro" id="IPR004588">
    <property type="entry name" value="IspG_bac-typ"/>
</dbReference>
<dbReference type="InterPro" id="IPR045854">
    <property type="entry name" value="NO2/SO3_Rdtase_4Fe4S_sf"/>
</dbReference>
<dbReference type="NCBIfam" id="TIGR00612">
    <property type="entry name" value="ispG_gcpE"/>
    <property type="match status" value="1"/>
</dbReference>
<dbReference type="NCBIfam" id="NF001540">
    <property type="entry name" value="PRK00366.1"/>
    <property type="match status" value="1"/>
</dbReference>
<dbReference type="PANTHER" id="PTHR30454">
    <property type="entry name" value="4-HYDROXY-3-METHYLBUT-2-EN-1-YL DIPHOSPHATE SYNTHASE"/>
    <property type="match status" value="1"/>
</dbReference>
<dbReference type="PANTHER" id="PTHR30454:SF0">
    <property type="entry name" value="4-HYDROXY-3-METHYLBUT-2-EN-1-YL DIPHOSPHATE SYNTHASE (FERREDOXIN), CHLOROPLASTIC"/>
    <property type="match status" value="1"/>
</dbReference>
<dbReference type="Pfam" id="PF04551">
    <property type="entry name" value="GcpE"/>
    <property type="match status" value="1"/>
</dbReference>
<dbReference type="PIRSF" id="PIRSF004640">
    <property type="entry name" value="IspG"/>
    <property type="match status" value="1"/>
</dbReference>
<dbReference type="SUPFAM" id="SSF51717">
    <property type="entry name" value="Dihydropteroate synthetase-like"/>
    <property type="match status" value="1"/>
</dbReference>
<dbReference type="SUPFAM" id="SSF56014">
    <property type="entry name" value="Nitrite and sulphite reductase 4Fe-4S domain-like"/>
    <property type="match status" value="1"/>
</dbReference>
<evidence type="ECO:0000255" key="1">
    <source>
        <dbReference type="HAMAP-Rule" id="MF_00159"/>
    </source>
</evidence>
<gene>
    <name evidence="1" type="primary">ispG</name>
    <name type="ordered locus">SPAB_00417</name>
</gene>
<keyword id="KW-0004">4Fe-4S</keyword>
<keyword id="KW-0408">Iron</keyword>
<keyword id="KW-0411">Iron-sulfur</keyword>
<keyword id="KW-0414">Isoprene biosynthesis</keyword>
<keyword id="KW-0479">Metal-binding</keyword>
<keyword id="KW-0560">Oxidoreductase</keyword>
<protein>
    <recommendedName>
        <fullName evidence="1">4-hydroxy-3-methylbut-2-en-1-yl diphosphate synthase (flavodoxin)</fullName>
        <ecNumber evidence="1">1.17.7.3</ecNumber>
    </recommendedName>
    <alternativeName>
        <fullName evidence="1">1-hydroxy-2-methyl-2-(E)-butenyl 4-diphosphate synthase</fullName>
    </alternativeName>
</protein>